<accession>Q8NXC0</accession>
<organism>
    <name type="scientific">Staphylococcus aureus (strain MW2)</name>
    <dbReference type="NCBI Taxonomy" id="196620"/>
    <lineage>
        <taxon>Bacteria</taxon>
        <taxon>Bacillati</taxon>
        <taxon>Bacillota</taxon>
        <taxon>Bacilli</taxon>
        <taxon>Bacillales</taxon>
        <taxon>Staphylococcaceae</taxon>
        <taxon>Staphylococcus</taxon>
    </lineage>
</organism>
<name>RF3_STAAW</name>
<reference key="1">
    <citation type="journal article" date="2002" name="Lancet">
        <title>Genome and virulence determinants of high virulence community-acquired MRSA.</title>
        <authorList>
            <person name="Baba T."/>
            <person name="Takeuchi F."/>
            <person name="Kuroda M."/>
            <person name="Yuzawa H."/>
            <person name="Aoki K."/>
            <person name="Oguchi A."/>
            <person name="Nagai Y."/>
            <person name="Iwama N."/>
            <person name="Asano K."/>
            <person name="Naimi T."/>
            <person name="Kuroda H."/>
            <person name="Cui L."/>
            <person name="Yamamoto K."/>
            <person name="Hiramatsu K."/>
        </authorList>
    </citation>
    <scope>NUCLEOTIDE SEQUENCE [LARGE SCALE GENOMIC DNA]</scope>
    <source>
        <strain>MW2</strain>
    </source>
</reference>
<gene>
    <name evidence="1" type="primary">prfC</name>
    <name type="ordered locus">MW0901</name>
</gene>
<comment type="function">
    <text evidence="1">Increases the formation of ribosomal termination complexes and stimulates activities of RF-1 and RF-2. It binds guanine nucleotides and has strong preference for UGA stop codons. It may interact directly with the ribosome. The stimulation of RF-1 and RF-2 is significantly reduced by GTP and GDP, but not by GMP.</text>
</comment>
<comment type="subcellular location">
    <subcellularLocation>
        <location evidence="1">Cytoplasm</location>
    </subcellularLocation>
</comment>
<comment type="similarity">
    <text evidence="1">Belongs to the TRAFAC class translation factor GTPase superfamily. Classic translation factor GTPase family. PrfC subfamily.</text>
</comment>
<feature type="chain" id="PRO_0000210966" description="Peptide chain release factor 3">
    <location>
        <begin position="1"/>
        <end position="520"/>
    </location>
</feature>
<feature type="domain" description="tr-type G">
    <location>
        <begin position="8"/>
        <end position="277"/>
    </location>
</feature>
<feature type="binding site" evidence="1">
    <location>
        <begin position="17"/>
        <end position="24"/>
    </location>
    <ligand>
        <name>GTP</name>
        <dbReference type="ChEBI" id="CHEBI:37565"/>
    </ligand>
</feature>
<feature type="binding site" evidence="1">
    <location>
        <begin position="85"/>
        <end position="89"/>
    </location>
    <ligand>
        <name>GTP</name>
        <dbReference type="ChEBI" id="CHEBI:37565"/>
    </ligand>
</feature>
<feature type="binding site" evidence="1">
    <location>
        <begin position="139"/>
        <end position="142"/>
    </location>
    <ligand>
        <name>GTP</name>
        <dbReference type="ChEBI" id="CHEBI:37565"/>
    </ligand>
</feature>
<evidence type="ECO:0000255" key="1">
    <source>
        <dbReference type="HAMAP-Rule" id="MF_00072"/>
    </source>
</evidence>
<dbReference type="EMBL" id="BA000033">
    <property type="protein sequence ID" value="BAB94766.1"/>
    <property type="molecule type" value="Genomic_DNA"/>
</dbReference>
<dbReference type="RefSeq" id="WP_001049957.1">
    <property type="nucleotide sequence ID" value="NC_003923.1"/>
</dbReference>
<dbReference type="SMR" id="Q8NXC0"/>
<dbReference type="KEGG" id="sam:MW0901"/>
<dbReference type="HOGENOM" id="CLU_002794_2_1_9"/>
<dbReference type="GO" id="GO:0005829">
    <property type="term" value="C:cytosol"/>
    <property type="evidence" value="ECO:0007669"/>
    <property type="project" value="TreeGrafter"/>
</dbReference>
<dbReference type="GO" id="GO:0005525">
    <property type="term" value="F:GTP binding"/>
    <property type="evidence" value="ECO:0007669"/>
    <property type="project" value="UniProtKB-UniRule"/>
</dbReference>
<dbReference type="GO" id="GO:0003924">
    <property type="term" value="F:GTPase activity"/>
    <property type="evidence" value="ECO:0007669"/>
    <property type="project" value="InterPro"/>
</dbReference>
<dbReference type="GO" id="GO:0016150">
    <property type="term" value="F:translation release factor activity, codon nonspecific"/>
    <property type="evidence" value="ECO:0007669"/>
    <property type="project" value="TreeGrafter"/>
</dbReference>
<dbReference type="GO" id="GO:0016149">
    <property type="term" value="F:translation release factor activity, codon specific"/>
    <property type="evidence" value="ECO:0007669"/>
    <property type="project" value="UniProtKB-UniRule"/>
</dbReference>
<dbReference type="GO" id="GO:0006449">
    <property type="term" value="P:regulation of translational termination"/>
    <property type="evidence" value="ECO:0007669"/>
    <property type="project" value="UniProtKB-UniRule"/>
</dbReference>
<dbReference type="CDD" id="cd04169">
    <property type="entry name" value="RF3"/>
    <property type="match status" value="1"/>
</dbReference>
<dbReference type="CDD" id="cd16259">
    <property type="entry name" value="RF3_III"/>
    <property type="match status" value="1"/>
</dbReference>
<dbReference type="FunFam" id="2.40.30.10:FF:000040">
    <property type="entry name" value="Peptide chain release factor 3"/>
    <property type="match status" value="1"/>
</dbReference>
<dbReference type="FunFam" id="3.30.70.3280:FF:000001">
    <property type="entry name" value="Peptide chain release factor 3"/>
    <property type="match status" value="1"/>
</dbReference>
<dbReference type="FunFam" id="3.40.50.300:FF:000542">
    <property type="entry name" value="Peptide chain release factor 3"/>
    <property type="match status" value="1"/>
</dbReference>
<dbReference type="Gene3D" id="3.40.50.300">
    <property type="entry name" value="P-loop containing nucleotide triphosphate hydrolases"/>
    <property type="match status" value="1"/>
</dbReference>
<dbReference type="Gene3D" id="3.30.70.3280">
    <property type="entry name" value="Peptide chain release factor 3, domain III"/>
    <property type="match status" value="1"/>
</dbReference>
<dbReference type="Gene3D" id="2.40.30.10">
    <property type="entry name" value="Translation factors"/>
    <property type="match status" value="1"/>
</dbReference>
<dbReference type="HAMAP" id="MF_00072">
    <property type="entry name" value="Rel_fac_3"/>
    <property type="match status" value="1"/>
</dbReference>
<dbReference type="InterPro" id="IPR053905">
    <property type="entry name" value="EF-G-like_DII"/>
</dbReference>
<dbReference type="InterPro" id="IPR035647">
    <property type="entry name" value="EFG_III/V"/>
</dbReference>
<dbReference type="InterPro" id="IPR031157">
    <property type="entry name" value="G_TR_CS"/>
</dbReference>
<dbReference type="InterPro" id="IPR027417">
    <property type="entry name" value="P-loop_NTPase"/>
</dbReference>
<dbReference type="InterPro" id="IPR004548">
    <property type="entry name" value="PrfC"/>
</dbReference>
<dbReference type="InterPro" id="IPR032090">
    <property type="entry name" value="RF3_C"/>
</dbReference>
<dbReference type="InterPro" id="IPR038467">
    <property type="entry name" value="RF3_dom_3_sf"/>
</dbReference>
<dbReference type="InterPro" id="IPR041732">
    <property type="entry name" value="RF3_GTP-bd"/>
</dbReference>
<dbReference type="InterPro" id="IPR005225">
    <property type="entry name" value="Small_GTP-bd"/>
</dbReference>
<dbReference type="InterPro" id="IPR000795">
    <property type="entry name" value="T_Tr_GTP-bd_dom"/>
</dbReference>
<dbReference type="InterPro" id="IPR009000">
    <property type="entry name" value="Transl_B-barrel_sf"/>
</dbReference>
<dbReference type="NCBIfam" id="TIGR00503">
    <property type="entry name" value="prfC"/>
    <property type="match status" value="1"/>
</dbReference>
<dbReference type="NCBIfam" id="NF001964">
    <property type="entry name" value="PRK00741.1"/>
    <property type="match status" value="1"/>
</dbReference>
<dbReference type="NCBIfam" id="TIGR00231">
    <property type="entry name" value="small_GTP"/>
    <property type="match status" value="1"/>
</dbReference>
<dbReference type="PANTHER" id="PTHR43556">
    <property type="entry name" value="PEPTIDE CHAIN RELEASE FACTOR RF3"/>
    <property type="match status" value="1"/>
</dbReference>
<dbReference type="PANTHER" id="PTHR43556:SF2">
    <property type="entry name" value="PEPTIDE CHAIN RELEASE FACTOR RF3"/>
    <property type="match status" value="1"/>
</dbReference>
<dbReference type="Pfam" id="PF22042">
    <property type="entry name" value="EF-G_D2"/>
    <property type="match status" value="1"/>
</dbReference>
<dbReference type="Pfam" id="PF00009">
    <property type="entry name" value="GTP_EFTU"/>
    <property type="match status" value="1"/>
</dbReference>
<dbReference type="Pfam" id="PF16658">
    <property type="entry name" value="RF3_C"/>
    <property type="match status" value="1"/>
</dbReference>
<dbReference type="PRINTS" id="PR00315">
    <property type="entry name" value="ELONGATNFCT"/>
</dbReference>
<dbReference type="SUPFAM" id="SSF54980">
    <property type="entry name" value="EF-G C-terminal domain-like"/>
    <property type="match status" value="1"/>
</dbReference>
<dbReference type="SUPFAM" id="SSF52540">
    <property type="entry name" value="P-loop containing nucleoside triphosphate hydrolases"/>
    <property type="match status" value="1"/>
</dbReference>
<dbReference type="SUPFAM" id="SSF50447">
    <property type="entry name" value="Translation proteins"/>
    <property type="match status" value="1"/>
</dbReference>
<dbReference type="PROSITE" id="PS00301">
    <property type="entry name" value="G_TR_1"/>
    <property type="match status" value="1"/>
</dbReference>
<dbReference type="PROSITE" id="PS51722">
    <property type="entry name" value="G_TR_2"/>
    <property type="match status" value="1"/>
</dbReference>
<proteinExistence type="inferred from homology"/>
<protein>
    <recommendedName>
        <fullName evidence="1">Peptide chain release factor 3</fullName>
        <shortName evidence="1">RF-3</shortName>
    </recommendedName>
</protein>
<keyword id="KW-0963">Cytoplasm</keyword>
<keyword id="KW-0342">GTP-binding</keyword>
<keyword id="KW-0547">Nucleotide-binding</keyword>
<keyword id="KW-0648">Protein biosynthesis</keyword>
<sequence>MNLKQEVESRKTFAIISHPDAGKTTLTEKLLYFSGAIREAGTVKGKKTGKFATSDWMKVEQERGISVTSSVMQFDYDDYKINILDTPGHEDFSEDTYRTLMAVDSAVMVIDCAKGIEPQTLKLFKVCKMRGIPIFTFINKLDRVGKEPFELLDEIEETLNIETYPMNWPIGMGQSFFGIIDRKSKTIEPFRDEENILHLNDDFELEEDHAITNDSAFEQAIEELMLVEEAGEAFDNDALLSGDLTPVFFGSALANFGVQNFLNAYVDFAPMPNARQTKEEVEVSPFDDSFSGFIFKIQANMDPKHRDRIAFMRVVSGAFERGMDVTLQRTNKKQKITRSTSFMADDKETVNHAVAGDIIGLYDTGNYQIGDTLVGGKQTYSFQDLPQFTPEIFMKVSAKNVMKQKHFHKGIEQLVQEGAIQYYKTLHTNQIILGAVGQLQFEVFEHRMKNEYNVDVVMEPVGRKIARWIENEDQITDKMNTSRSILVKDRYDDLVFLFENEFATRWFEEKFPEIKLYSLL</sequence>